<gene>
    <name type="primary">cpiC</name>
    <name type="ORF">DDB_G0277001</name>
</gene>
<keyword id="KW-0963">Cytoplasm</keyword>
<keyword id="KW-0646">Protease inhibitor</keyword>
<keyword id="KW-1185">Reference proteome</keyword>
<keyword id="KW-0789">Thiol protease inhibitor</keyword>
<organism>
    <name type="scientific">Dictyostelium discoideum</name>
    <name type="common">Social amoeba</name>
    <dbReference type="NCBI Taxonomy" id="44689"/>
    <lineage>
        <taxon>Eukaryota</taxon>
        <taxon>Amoebozoa</taxon>
        <taxon>Evosea</taxon>
        <taxon>Eumycetozoa</taxon>
        <taxon>Dictyostelia</taxon>
        <taxon>Dictyosteliales</taxon>
        <taxon>Dictyosteliaceae</taxon>
        <taxon>Dictyostelium</taxon>
    </lineage>
</organism>
<sequence length="94" mass="10739">MTGGISPHPINATPEIQEITNTVKEQLEKKLGTNYSIFQAISYKKQLVNGMNYFIKVKTDNGYDHIRVYEAFKGTPNLVSVQQHKSLEDDITYF</sequence>
<comment type="function">
    <text evidence="1">Intracellular thiol proteinase inhibitor.</text>
</comment>
<comment type="subcellular location">
    <subcellularLocation>
        <location evidence="1">Cytoplasm</location>
    </subcellularLocation>
</comment>
<comment type="similarity">
    <text evidence="2">Belongs to the cystatin family.</text>
</comment>
<dbReference type="EMBL" id="AB189920">
    <property type="protein sequence ID" value="BAD77797.1"/>
    <property type="molecule type" value="mRNA"/>
</dbReference>
<dbReference type="EMBL" id="AB189921">
    <property type="protein sequence ID" value="BAD77798.1"/>
    <property type="molecule type" value="Genomic_DNA"/>
</dbReference>
<dbReference type="EMBL" id="AAFI02000019">
    <property type="protein sequence ID" value="EAL69002.2"/>
    <property type="molecule type" value="Genomic_DNA"/>
</dbReference>
<dbReference type="RefSeq" id="XP_642845.2">
    <property type="nucleotide sequence ID" value="XM_637753.2"/>
</dbReference>
<dbReference type="SMR" id="Q5R1U3"/>
<dbReference type="FunCoup" id="Q5R1U3">
    <property type="interactions" value="27"/>
</dbReference>
<dbReference type="STRING" id="44689.Q5R1U3"/>
<dbReference type="PaxDb" id="44689-DDB0252666"/>
<dbReference type="EnsemblProtists" id="EAL69002">
    <property type="protein sequence ID" value="EAL69002"/>
    <property type="gene ID" value="DDB_G0277001"/>
</dbReference>
<dbReference type="GeneID" id="8620709"/>
<dbReference type="KEGG" id="ddi:DDB_G0277001"/>
<dbReference type="dictyBase" id="DDB_G0277001">
    <property type="gene designation" value="cpiC"/>
</dbReference>
<dbReference type="VEuPathDB" id="AmoebaDB:DDB_G0277001"/>
<dbReference type="eggNOG" id="ENOG502SF2X">
    <property type="taxonomic scope" value="Eukaryota"/>
</dbReference>
<dbReference type="HOGENOM" id="CLU_150234_2_1_1"/>
<dbReference type="InParanoid" id="Q5R1U3"/>
<dbReference type="OMA" id="HVGNEEY"/>
<dbReference type="PhylomeDB" id="Q5R1U3"/>
<dbReference type="Reactome" id="R-DDI-6798695">
    <property type="pathway name" value="Neutrophil degranulation"/>
</dbReference>
<dbReference type="PRO" id="PR:Q5R1U3"/>
<dbReference type="Proteomes" id="UP000002195">
    <property type="component" value="Chromosome 2"/>
</dbReference>
<dbReference type="GO" id="GO:0005829">
    <property type="term" value="C:cytosol"/>
    <property type="evidence" value="ECO:0000250"/>
    <property type="project" value="dictyBase"/>
</dbReference>
<dbReference type="GO" id="GO:0004869">
    <property type="term" value="F:cysteine-type endopeptidase inhibitor activity"/>
    <property type="evidence" value="ECO:0000250"/>
    <property type="project" value="dictyBase"/>
</dbReference>
<dbReference type="GO" id="GO:0006972">
    <property type="term" value="P:hyperosmotic response"/>
    <property type="evidence" value="ECO:0000270"/>
    <property type="project" value="dictyBase"/>
</dbReference>
<dbReference type="GO" id="GO:0051246">
    <property type="term" value="P:regulation of protein metabolic process"/>
    <property type="evidence" value="ECO:0000250"/>
    <property type="project" value="dictyBase"/>
</dbReference>
<dbReference type="CDD" id="cd00042">
    <property type="entry name" value="CY"/>
    <property type="match status" value="1"/>
</dbReference>
<dbReference type="FunFam" id="3.10.450.10:FF:000001">
    <property type="entry name" value="Cystatin-A"/>
    <property type="match status" value="1"/>
</dbReference>
<dbReference type="Gene3D" id="3.10.450.10">
    <property type="match status" value="1"/>
</dbReference>
<dbReference type="InterPro" id="IPR000010">
    <property type="entry name" value="Cystatin_dom"/>
</dbReference>
<dbReference type="InterPro" id="IPR046350">
    <property type="entry name" value="Cystatin_sf"/>
</dbReference>
<dbReference type="InterPro" id="IPR001713">
    <property type="entry name" value="Prot_inh_stefin"/>
</dbReference>
<dbReference type="PANTHER" id="PTHR11414:SF21">
    <property type="entry name" value="CYSTATIN 14A, TANDEM DUPLICATE 1-RELATED"/>
    <property type="match status" value="1"/>
</dbReference>
<dbReference type="PANTHER" id="PTHR11414">
    <property type="entry name" value="CYSTATIN FAMILY MEMBER"/>
    <property type="match status" value="1"/>
</dbReference>
<dbReference type="Pfam" id="PF00031">
    <property type="entry name" value="Cystatin"/>
    <property type="match status" value="1"/>
</dbReference>
<dbReference type="PRINTS" id="PR00295">
    <property type="entry name" value="STEFINA"/>
</dbReference>
<dbReference type="SMART" id="SM00043">
    <property type="entry name" value="CY"/>
    <property type="match status" value="1"/>
</dbReference>
<dbReference type="SUPFAM" id="SSF54403">
    <property type="entry name" value="Cystatin/monellin"/>
    <property type="match status" value="1"/>
</dbReference>
<evidence type="ECO:0000250" key="1"/>
<evidence type="ECO:0000305" key="2"/>
<feature type="chain" id="PRO_0000327787" description="Cystatin-A3">
    <location>
        <begin position="1"/>
        <end position="94"/>
    </location>
</feature>
<feature type="short sequence motif" description="Secondary area of contact" evidence="1">
    <location>
        <begin position="46"/>
        <end position="50"/>
    </location>
</feature>
<feature type="site" description="Reactive site" evidence="1">
    <location>
        <position position="3"/>
    </location>
</feature>
<reference key="1">
    <citation type="journal article" date="2005" name="Mol. Biol. Rep.">
        <title>Reevaluation of the predicted gene structure of Dictyostelium cystatin A3 (cpiC) by nucleotide sequence determination of its cDNA and its phylogenetic position in the cystatin superfamily.</title>
        <authorList>
            <person name="El-Halawany M.S."/>
            <person name="Shibata H."/>
            <person name="Hitomi K."/>
            <person name="Maki M."/>
        </authorList>
    </citation>
    <scope>NUCLEOTIDE SEQUENCE [GENOMIC DNA / MRNA]</scope>
    <source>
        <strain>AX2</strain>
        <strain>AX4</strain>
    </source>
</reference>
<reference key="2">
    <citation type="journal article" date="2002" name="Nature">
        <title>Sequence and analysis of chromosome 2 of Dictyostelium discoideum.</title>
        <authorList>
            <person name="Gloeckner G."/>
            <person name="Eichinger L."/>
            <person name="Szafranski K."/>
            <person name="Pachebat J.A."/>
            <person name="Bankier A.T."/>
            <person name="Dear P.H."/>
            <person name="Lehmann R."/>
            <person name="Baumgart C."/>
            <person name="Parra G."/>
            <person name="Abril J.F."/>
            <person name="Guigo R."/>
            <person name="Kumpf K."/>
            <person name="Tunggal B."/>
            <person name="Cox E.C."/>
            <person name="Quail M.A."/>
            <person name="Platzer M."/>
            <person name="Rosenthal A."/>
            <person name="Noegel A.A."/>
        </authorList>
    </citation>
    <scope>NUCLEOTIDE SEQUENCE [LARGE SCALE GENOMIC DNA]</scope>
    <source>
        <strain>AX4</strain>
    </source>
</reference>
<reference key="3">
    <citation type="journal article" date="2005" name="Nature">
        <title>The genome of the social amoeba Dictyostelium discoideum.</title>
        <authorList>
            <person name="Eichinger L."/>
            <person name="Pachebat J.A."/>
            <person name="Gloeckner G."/>
            <person name="Rajandream M.A."/>
            <person name="Sucgang R."/>
            <person name="Berriman M."/>
            <person name="Song J."/>
            <person name="Olsen R."/>
            <person name="Szafranski K."/>
            <person name="Xu Q."/>
            <person name="Tunggal B."/>
            <person name="Kummerfeld S."/>
            <person name="Madera M."/>
            <person name="Konfortov B.A."/>
            <person name="Rivero F."/>
            <person name="Bankier A.T."/>
            <person name="Lehmann R."/>
            <person name="Hamlin N."/>
            <person name="Davies R."/>
            <person name="Gaudet P."/>
            <person name="Fey P."/>
            <person name="Pilcher K."/>
            <person name="Chen G."/>
            <person name="Saunders D."/>
            <person name="Sodergren E.J."/>
            <person name="Davis P."/>
            <person name="Kerhornou A."/>
            <person name="Nie X."/>
            <person name="Hall N."/>
            <person name="Anjard C."/>
            <person name="Hemphill L."/>
            <person name="Bason N."/>
            <person name="Farbrother P."/>
            <person name="Desany B."/>
            <person name="Just E."/>
            <person name="Morio T."/>
            <person name="Rost R."/>
            <person name="Churcher C.M."/>
            <person name="Cooper J."/>
            <person name="Haydock S."/>
            <person name="van Driessche N."/>
            <person name="Cronin A."/>
            <person name="Goodhead I."/>
            <person name="Muzny D.M."/>
            <person name="Mourier T."/>
            <person name="Pain A."/>
            <person name="Lu M."/>
            <person name="Harper D."/>
            <person name="Lindsay R."/>
            <person name="Hauser H."/>
            <person name="James K.D."/>
            <person name="Quiles M."/>
            <person name="Madan Babu M."/>
            <person name="Saito T."/>
            <person name="Buchrieser C."/>
            <person name="Wardroper A."/>
            <person name="Felder M."/>
            <person name="Thangavelu M."/>
            <person name="Johnson D."/>
            <person name="Knights A."/>
            <person name="Loulseged H."/>
            <person name="Mungall K.L."/>
            <person name="Oliver K."/>
            <person name="Price C."/>
            <person name="Quail M.A."/>
            <person name="Urushihara H."/>
            <person name="Hernandez J."/>
            <person name="Rabbinowitsch E."/>
            <person name="Steffen D."/>
            <person name="Sanders M."/>
            <person name="Ma J."/>
            <person name="Kohara Y."/>
            <person name="Sharp S."/>
            <person name="Simmonds M.N."/>
            <person name="Spiegler S."/>
            <person name="Tivey A."/>
            <person name="Sugano S."/>
            <person name="White B."/>
            <person name="Walker D."/>
            <person name="Woodward J.R."/>
            <person name="Winckler T."/>
            <person name="Tanaka Y."/>
            <person name="Shaulsky G."/>
            <person name="Schleicher M."/>
            <person name="Weinstock G.M."/>
            <person name="Rosenthal A."/>
            <person name="Cox E.C."/>
            <person name="Chisholm R.L."/>
            <person name="Gibbs R.A."/>
            <person name="Loomis W.F."/>
            <person name="Platzer M."/>
            <person name="Kay R.R."/>
            <person name="Williams J.G."/>
            <person name="Dear P.H."/>
            <person name="Noegel A.A."/>
            <person name="Barrell B.G."/>
            <person name="Kuspa A."/>
        </authorList>
    </citation>
    <scope>NUCLEOTIDE SEQUENCE [LARGE SCALE GENOMIC DNA]</scope>
    <source>
        <strain>AX4</strain>
    </source>
</reference>
<reference key="4">
    <citation type="journal article" date="2004" name="Biol. Chem.">
        <title>Identification of cysteine protease inhibitors that belong to cystatin family 1 in the cellular slime mold Dictyostelium discoideum.</title>
        <authorList>
            <person name="El-Halawany M.S."/>
            <person name="Ohkouchi S."/>
            <person name="Shibata H."/>
            <person name="Hitomi K."/>
            <person name="Maki M."/>
        </authorList>
    </citation>
    <scope>IDENTIFICATION</scope>
</reference>
<proteinExistence type="inferred from homology"/>
<name>CYTA3_DICDI</name>
<accession>Q5R1U3</accession>
<accession>Q550T7</accession>
<accession>Q5R1U2</accession>
<accession>Q86JB2</accession>
<protein>
    <recommendedName>
        <fullName>Cystatin-A3</fullName>
    </recommendedName>
    <alternativeName>
        <fullName>VSA745</fullName>
    </alternativeName>
</protein>